<organism>
    <name type="scientific">Thermotoga neapolitana (strain ATCC 49049 / DSM 4359 / NBRC 107923 / NS-E)</name>
    <dbReference type="NCBI Taxonomy" id="309803"/>
    <lineage>
        <taxon>Bacteria</taxon>
        <taxon>Thermotogati</taxon>
        <taxon>Thermotogota</taxon>
        <taxon>Thermotogae</taxon>
        <taxon>Thermotogales</taxon>
        <taxon>Thermotogaceae</taxon>
        <taxon>Thermotoga</taxon>
    </lineage>
</organism>
<accession>B9K884</accession>
<proteinExistence type="evidence at protein level"/>
<dbReference type="EC" id="3.6.5.3" evidence="2"/>
<dbReference type="EMBL" id="CP000916">
    <property type="protein sequence ID" value="ACM23167.1"/>
    <property type="molecule type" value="Genomic_DNA"/>
</dbReference>
<dbReference type="RefSeq" id="WP_015919484.1">
    <property type="nucleotide sequence ID" value="NC_011978.1"/>
</dbReference>
<dbReference type="PDB" id="5W75">
    <property type="method" value="X-ray"/>
    <property type="resolution" value="2.30 A"/>
    <property type="chains" value="A/B/C/D=9-400"/>
</dbReference>
<dbReference type="PDBsum" id="5W75"/>
<dbReference type="SMR" id="B9K884"/>
<dbReference type="STRING" id="309803.CTN_0991"/>
<dbReference type="KEGG" id="tna:CTN_0991"/>
<dbReference type="eggNOG" id="COG0050">
    <property type="taxonomic scope" value="Bacteria"/>
</dbReference>
<dbReference type="HOGENOM" id="CLU_007265_0_1_0"/>
<dbReference type="Proteomes" id="UP000000445">
    <property type="component" value="Chromosome"/>
</dbReference>
<dbReference type="GO" id="GO:0005829">
    <property type="term" value="C:cytosol"/>
    <property type="evidence" value="ECO:0007669"/>
    <property type="project" value="TreeGrafter"/>
</dbReference>
<dbReference type="GO" id="GO:0005525">
    <property type="term" value="F:GTP binding"/>
    <property type="evidence" value="ECO:0007669"/>
    <property type="project" value="UniProtKB-UniRule"/>
</dbReference>
<dbReference type="GO" id="GO:0003924">
    <property type="term" value="F:GTPase activity"/>
    <property type="evidence" value="ECO:0007669"/>
    <property type="project" value="InterPro"/>
</dbReference>
<dbReference type="GO" id="GO:0003746">
    <property type="term" value="F:translation elongation factor activity"/>
    <property type="evidence" value="ECO:0007669"/>
    <property type="project" value="UniProtKB-UniRule"/>
</dbReference>
<dbReference type="CDD" id="cd01884">
    <property type="entry name" value="EF_Tu"/>
    <property type="match status" value="1"/>
</dbReference>
<dbReference type="CDD" id="cd03697">
    <property type="entry name" value="EFTU_II"/>
    <property type="match status" value="1"/>
</dbReference>
<dbReference type="CDD" id="cd03707">
    <property type="entry name" value="EFTU_III"/>
    <property type="match status" value="1"/>
</dbReference>
<dbReference type="FunFam" id="2.40.30.10:FF:000001">
    <property type="entry name" value="Elongation factor Tu"/>
    <property type="match status" value="1"/>
</dbReference>
<dbReference type="FunFam" id="3.40.50.300:FF:000003">
    <property type="entry name" value="Elongation factor Tu"/>
    <property type="match status" value="1"/>
</dbReference>
<dbReference type="Gene3D" id="3.40.50.300">
    <property type="entry name" value="P-loop containing nucleotide triphosphate hydrolases"/>
    <property type="match status" value="1"/>
</dbReference>
<dbReference type="Gene3D" id="2.40.30.10">
    <property type="entry name" value="Translation factors"/>
    <property type="match status" value="2"/>
</dbReference>
<dbReference type="HAMAP" id="MF_00118_B">
    <property type="entry name" value="EF_Tu_B"/>
    <property type="match status" value="1"/>
</dbReference>
<dbReference type="InterPro" id="IPR041709">
    <property type="entry name" value="EF-Tu_GTP-bd"/>
</dbReference>
<dbReference type="InterPro" id="IPR050055">
    <property type="entry name" value="EF-Tu_GTPase"/>
</dbReference>
<dbReference type="InterPro" id="IPR004161">
    <property type="entry name" value="EFTu-like_2"/>
</dbReference>
<dbReference type="InterPro" id="IPR033720">
    <property type="entry name" value="EFTU_2"/>
</dbReference>
<dbReference type="InterPro" id="IPR031157">
    <property type="entry name" value="G_TR_CS"/>
</dbReference>
<dbReference type="InterPro" id="IPR027417">
    <property type="entry name" value="P-loop_NTPase"/>
</dbReference>
<dbReference type="InterPro" id="IPR005225">
    <property type="entry name" value="Small_GTP-bd"/>
</dbReference>
<dbReference type="InterPro" id="IPR000795">
    <property type="entry name" value="T_Tr_GTP-bd_dom"/>
</dbReference>
<dbReference type="InterPro" id="IPR009000">
    <property type="entry name" value="Transl_B-barrel_sf"/>
</dbReference>
<dbReference type="InterPro" id="IPR009001">
    <property type="entry name" value="Transl_elong_EF1A/Init_IF2_C"/>
</dbReference>
<dbReference type="InterPro" id="IPR004541">
    <property type="entry name" value="Transl_elong_EFTu/EF1A_bac/org"/>
</dbReference>
<dbReference type="InterPro" id="IPR004160">
    <property type="entry name" value="Transl_elong_EFTu/EF1A_C"/>
</dbReference>
<dbReference type="NCBIfam" id="TIGR00485">
    <property type="entry name" value="EF-Tu"/>
    <property type="match status" value="1"/>
</dbReference>
<dbReference type="NCBIfam" id="NF000766">
    <property type="entry name" value="PRK00049.1"/>
    <property type="match status" value="1"/>
</dbReference>
<dbReference type="NCBIfam" id="NF009372">
    <property type="entry name" value="PRK12735.1"/>
    <property type="match status" value="1"/>
</dbReference>
<dbReference type="NCBIfam" id="NF009373">
    <property type="entry name" value="PRK12736.1"/>
    <property type="match status" value="1"/>
</dbReference>
<dbReference type="NCBIfam" id="TIGR00231">
    <property type="entry name" value="small_GTP"/>
    <property type="match status" value="1"/>
</dbReference>
<dbReference type="PANTHER" id="PTHR43721:SF22">
    <property type="entry name" value="ELONGATION FACTOR TU, MITOCHONDRIAL"/>
    <property type="match status" value="1"/>
</dbReference>
<dbReference type="PANTHER" id="PTHR43721">
    <property type="entry name" value="ELONGATION FACTOR TU-RELATED"/>
    <property type="match status" value="1"/>
</dbReference>
<dbReference type="Pfam" id="PF00009">
    <property type="entry name" value="GTP_EFTU"/>
    <property type="match status" value="1"/>
</dbReference>
<dbReference type="Pfam" id="PF03144">
    <property type="entry name" value="GTP_EFTU_D2"/>
    <property type="match status" value="1"/>
</dbReference>
<dbReference type="Pfam" id="PF03143">
    <property type="entry name" value="GTP_EFTU_D3"/>
    <property type="match status" value="1"/>
</dbReference>
<dbReference type="PRINTS" id="PR00315">
    <property type="entry name" value="ELONGATNFCT"/>
</dbReference>
<dbReference type="SUPFAM" id="SSF50465">
    <property type="entry name" value="EF-Tu/eEF-1alpha/eIF2-gamma C-terminal domain"/>
    <property type="match status" value="1"/>
</dbReference>
<dbReference type="SUPFAM" id="SSF52540">
    <property type="entry name" value="P-loop containing nucleoside triphosphate hydrolases"/>
    <property type="match status" value="1"/>
</dbReference>
<dbReference type="SUPFAM" id="SSF50447">
    <property type="entry name" value="Translation proteins"/>
    <property type="match status" value="1"/>
</dbReference>
<dbReference type="PROSITE" id="PS00301">
    <property type="entry name" value="G_TR_1"/>
    <property type="match status" value="1"/>
</dbReference>
<dbReference type="PROSITE" id="PS51722">
    <property type="entry name" value="G_TR_2"/>
    <property type="match status" value="1"/>
</dbReference>
<name>EFTU_THENN</name>
<gene>
    <name evidence="2" type="primary">tuf</name>
    <name type="ordered locus">CTN_0991</name>
</gene>
<comment type="function">
    <text evidence="2">GTP hydrolase that promotes the GTP-dependent binding of aminoacyl-tRNA to the A-site of ribosomes during protein biosynthesis.</text>
</comment>
<comment type="catalytic activity">
    <reaction evidence="2">
        <text>GTP + H2O = GDP + phosphate + H(+)</text>
        <dbReference type="Rhea" id="RHEA:19669"/>
        <dbReference type="ChEBI" id="CHEBI:15377"/>
        <dbReference type="ChEBI" id="CHEBI:15378"/>
        <dbReference type="ChEBI" id="CHEBI:37565"/>
        <dbReference type="ChEBI" id="CHEBI:43474"/>
        <dbReference type="ChEBI" id="CHEBI:58189"/>
        <dbReference type="EC" id="3.6.5.3"/>
    </reaction>
    <physiologicalReaction direction="left-to-right" evidence="2">
        <dbReference type="Rhea" id="RHEA:19670"/>
    </physiologicalReaction>
</comment>
<comment type="subunit">
    <text evidence="2">Monomer.</text>
</comment>
<comment type="subcellular location">
    <subcellularLocation>
        <location evidence="2">Cytoplasm</location>
    </subcellularLocation>
</comment>
<comment type="similarity">
    <text evidence="2">Belongs to the TRAFAC class translation factor GTPase superfamily. Classic translation factor GTPase family. EF-Tu/EF-1A subfamily.</text>
</comment>
<evidence type="ECO:0000250" key="1"/>
<evidence type="ECO:0000255" key="2">
    <source>
        <dbReference type="HAMAP-Rule" id="MF_00118"/>
    </source>
</evidence>
<evidence type="ECO:0007829" key="3">
    <source>
        <dbReference type="PDB" id="5W75"/>
    </source>
</evidence>
<sequence>MAKEKFVRTKPHVNVGTIGHIDHGKSTLTAAITKYLSLKGLAQYVPYDQIDKAPEEKARGITINITHVEYETEKRHYAHIDCPGHADYIKNMITGAAQMDGAILVVAATDGPMPQTREHVLLARQVEVPYMIVFINKTDMVDDPELIELVEMEVRDLLSQYEYPGDEVPVIKGSALKALEAPDDPNHEAYKPIQELLDAMDNYIPDPQRDVDKPFLMPIEDVFSITGRGTVVTGRIERGRIRPGDEVEIIGLSYEIRKTVVTSVEMFRKELDEGIAGDNVGCLLRGIDKDEVERGQVLAAPGSIKPHKRFKAEVYVLKKEEGGRHTPFTKGYKPQFYIRTADVTGEIVGLPEGVEMVMPGDHVEMEIELIYPVAIEKGQRFAIREGGRTVGAGVVTEVIE</sequence>
<protein>
    <recommendedName>
        <fullName evidence="2">Elongation factor Tu</fullName>
        <shortName evidence="2">EF-Tu</shortName>
        <ecNumber evidence="2">3.6.5.3</ecNumber>
    </recommendedName>
</protein>
<reference key="1">
    <citation type="submission" date="2007-11" db="EMBL/GenBank/DDBJ databases">
        <title>The genome sequence of the hyperthermophilic bacterium Thermotoga neapolitana.</title>
        <authorList>
            <person name="Lim S.K."/>
            <person name="Kim J.S."/>
            <person name="Cha S.H."/>
            <person name="Park B.C."/>
            <person name="Lee D.S."/>
            <person name="Tae H.S."/>
            <person name="Kim S.-J."/>
            <person name="Kim J.J."/>
            <person name="Park K.J."/>
            <person name="Lee S.Y."/>
        </authorList>
    </citation>
    <scope>NUCLEOTIDE SEQUENCE [LARGE SCALE GENOMIC DNA]</scope>
    <source>
        <strain>ATCC 49049 / DSM 4359 / NBRC 107923 / NS-E</strain>
    </source>
</reference>
<keyword id="KW-0002">3D-structure</keyword>
<keyword id="KW-0963">Cytoplasm</keyword>
<keyword id="KW-0251">Elongation factor</keyword>
<keyword id="KW-0342">GTP-binding</keyword>
<keyword id="KW-0378">Hydrolase</keyword>
<keyword id="KW-0460">Magnesium</keyword>
<keyword id="KW-0479">Metal-binding</keyword>
<keyword id="KW-0547">Nucleotide-binding</keyword>
<keyword id="KW-0648">Protein biosynthesis</keyword>
<feature type="chain" id="PRO_1000201420" description="Elongation factor Tu">
    <location>
        <begin position="1"/>
        <end position="400"/>
    </location>
</feature>
<feature type="domain" description="tr-type G">
    <location>
        <begin position="10"/>
        <end position="208"/>
    </location>
</feature>
<feature type="region of interest" description="G1" evidence="1">
    <location>
        <begin position="19"/>
        <end position="26"/>
    </location>
</feature>
<feature type="region of interest" description="G2" evidence="1">
    <location>
        <begin position="60"/>
        <end position="64"/>
    </location>
</feature>
<feature type="region of interest" description="G3" evidence="1">
    <location>
        <begin position="81"/>
        <end position="84"/>
    </location>
</feature>
<feature type="region of interest" description="G4" evidence="1">
    <location>
        <begin position="136"/>
        <end position="139"/>
    </location>
</feature>
<feature type="region of interest" description="G5" evidence="1">
    <location>
        <begin position="174"/>
        <end position="176"/>
    </location>
</feature>
<feature type="binding site" evidence="2">
    <location>
        <begin position="19"/>
        <end position="26"/>
    </location>
    <ligand>
        <name>GTP</name>
        <dbReference type="ChEBI" id="CHEBI:37565"/>
    </ligand>
</feature>
<feature type="binding site" evidence="2">
    <location>
        <position position="26"/>
    </location>
    <ligand>
        <name>Mg(2+)</name>
        <dbReference type="ChEBI" id="CHEBI:18420"/>
    </ligand>
</feature>
<feature type="binding site" evidence="2">
    <location>
        <begin position="81"/>
        <end position="85"/>
    </location>
    <ligand>
        <name>GTP</name>
        <dbReference type="ChEBI" id="CHEBI:37565"/>
    </ligand>
</feature>
<feature type="binding site" evidence="2">
    <location>
        <begin position="136"/>
        <end position="139"/>
    </location>
    <ligand>
        <name>GTP</name>
        <dbReference type="ChEBI" id="CHEBI:37565"/>
    </ligand>
</feature>
<feature type="strand" evidence="3">
    <location>
        <begin position="12"/>
        <end position="20"/>
    </location>
</feature>
<feature type="helix" evidence="3">
    <location>
        <begin position="25"/>
        <end position="37"/>
    </location>
</feature>
<feature type="turn" evidence="3">
    <location>
        <begin position="38"/>
        <end position="40"/>
    </location>
</feature>
<feature type="helix" evidence="3">
    <location>
        <begin position="47"/>
        <end position="51"/>
    </location>
</feature>
<feature type="strand" evidence="3">
    <location>
        <begin position="55"/>
        <end position="58"/>
    </location>
</feature>
<feature type="strand" evidence="3">
    <location>
        <begin position="61"/>
        <end position="64"/>
    </location>
</feature>
<feature type="strand" evidence="3">
    <location>
        <begin position="66"/>
        <end position="71"/>
    </location>
</feature>
<feature type="strand" evidence="3">
    <location>
        <begin position="76"/>
        <end position="81"/>
    </location>
</feature>
<feature type="helix" evidence="3">
    <location>
        <begin position="85"/>
        <end position="94"/>
    </location>
</feature>
<feature type="strand" evidence="3">
    <location>
        <begin position="100"/>
        <end position="107"/>
    </location>
</feature>
<feature type="turn" evidence="3">
    <location>
        <begin position="108"/>
        <end position="110"/>
    </location>
</feature>
<feature type="helix" evidence="3">
    <location>
        <begin position="114"/>
        <end position="126"/>
    </location>
</feature>
<feature type="strand" evidence="3">
    <location>
        <begin position="130"/>
        <end position="136"/>
    </location>
</feature>
<feature type="helix" evidence="3">
    <location>
        <begin position="138"/>
        <end position="140"/>
    </location>
</feature>
<feature type="helix" evidence="3">
    <location>
        <begin position="144"/>
        <end position="160"/>
    </location>
</feature>
<feature type="turn" evidence="3">
    <location>
        <begin position="165"/>
        <end position="167"/>
    </location>
</feature>
<feature type="strand" evidence="3">
    <location>
        <begin position="170"/>
        <end position="172"/>
    </location>
</feature>
<feature type="helix" evidence="3">
    <location>
        <begin position="175"/>
        <end position="179"/>
    </location>
</feature>
<feature type="helix" evidence="3">
    <location>
        <begin position="188"/>
        <end position="190"/>
    </location>
</feature>
<feature type="helix" evidence="3">
    <location>
        <begin position="191"/>
        <end position="203"/>
    </location>
</feature>
<feature type="turn" evidence="3">
    <location>
        <begin position="210"/>
        <end position="212"/>
    </location>
</feature>
<feature type="strand" evidence="3">
    <location>
        <begin position="216"/>
        <end position="218"/>
    </location>
</feature>
<feature type="strand" evidence="3">
    <location>
        <begin position="221"/>
        <end position="225"/>
    </location>
</feature>
<feature type="turn" evidence="3">
    <location>
        <begin position="226"/>
        <end position="228"/>
    </location>
</feature>
<feature type="strand" evidence="3">
    <location>
        <begin position="229"/>
        <end position="235"/>
    </location>
</feature>
<feature type="strand" evidence="3">
    <location>
        <begin position="238"/>
        <end position="241"/>
    </location>
</feature>
<feature type="strand" evidence="3">
    <location>
        <begin position="246"/>
        <end position="250"/>
    </location>
</feature>
<feature type="strand" evidence="3">
    <location>
        <begin position="257"/>
        <end position="266"/>
    </location>
</feature>
<feature type="strand" evidence="3">
    <location>
        <begin position="279"/>
        <end position="284"/>
    </location>
</feature>
<feature type="strand" evidence="3">
    <location>
        <begin position="297"/>
        <end position="300"/>
    </location>
</feature>
<feature type="strand" evidence="3">
    <location>
        <begin position="306"/>
        <end position="316"/>
    </location>
</feature>
<feature type="helix" evidence="3">
    <location>
        <begin position="319"/>
        <end position="321"/>
    </location>
</feature>
<feature type="strand" evidence="3">
    <location>
        <begin position="335"/>
        <end position="338"/>
    </location>
</feature>
<feature type="strand" evidence="3">
    <location>
        <begin position="341"/>
        <end position="348"/>
    </location>
</feature>
<feature type="strand" evidence="3">
    <location>
        <begin position="362"/>
        <end position="374"/>
    </location>
</feature>
<feature type="strand" evidence="3">
    <location>
        <begin position="380"/>
        <end position="385"/>
    </location>
</feature>
<feature type="strand" evidence="3">
    <location>
        <begin position="388"/>
        <end position="398"/>
    </location>
</feature>